<dbReference type="EMBL" id="CP000003">
    <property type="protein sequence ID" value="AAT87899.1"/>
    <property type="status" value="ALT_INIT"/>
    <property type="molecule type" value="Genomic_DNA"/>
</dbReference>
<dbReference type="RefSeq" id="WP_021340196.1">
    <property type="nucleotide sequence ID" value="NC_006086.1"/>
</dbReference>
<dbReference type="SMR" id="Q5X9L4"/>
<dbReference type="KEGG" id="spa:M6_Spy1764"/>
<dbReference type="HOGENOM" id="CLU_117621_6_1_9"/>
<dbReference type="Proteomes" id="UP000001167">
    <property type="component" value="Chromosome"/>
</dbReference>
<dbReference type="GO" id="GO:0005737">
    <property type="term" value="C:cytoplasm"/>
    <property type="evidence" value="ECO:0007669"/>
    <property type="project" value="UniProtKB-SubCell"/>
</dbReference>
<dbReference type="GO" id="GO:0003677">
    <property type="term" value="F:DNA binding"/>
    <property type="evidence" value="ECO:0007669"/>
    <property type="project" value="UniProtKB-KW"/>
</dbReference>
<dbReference type="CDD" id="cd04458">
    <property type="entry name" value="CSP_CDS"/>
    <property type="match status" value="1"/>
</dbReference>
<dbReference type="FunFam" id="2.40.50.140:FF:000006">
    <property type="entry name" value="Cold shock protein CspC"/>
    <property type="match status" value="1"/>
</dbReference>
<dbReference type="Gene3D" id="6.20.370.130">
    <property type="match status" value="1"/>
</dbReference>
<dbReference type="Gene3D" id="2.40.50.140">
    <property type="entry name" value="Nucleic acid-binding proteins"/>
    <property type="match status" value="1"/>
</dbReference>
<dbReference type="InterPro" id="IPR012156">
    <property type="entry name" value="Cold_shock_CspA"/>
</dbReference>
<dbReference type="InterPro" id="IPR050181">
    <property type="entry name" value="Cold_shock_domain"/>
</dbReference>
<dbReference type="InterPro" id="IPR011129">
    <property type="entry name" value="CSD"/>
</dbReference>
<dbReference type="InterPro" id="IPR019844">
    <property type="entry name" value="CSD_CS"/>
</dbReference>
<dbReference type="InterPro" id="IPR002059">
    <property type="entry name" value="CSP_DNA-bd"/>
</dbReference>
<dbReference type="InterPro" id="IPR012340">
    <property type="entry name" value="NA-bd_OB-fold"/>
</dbReference>
<dbReference type="PANTHER" id="PTHR11544">
    <property type="entry name" value="COLD SHOCK DOMAIN CONTAINING PROTEINS"/>
    <property type="match status" value="1"/>
</dbReference>
<dbReference type="Pfam" id="PF00313">
    <property type="entry name" value="CSD"/>
    <property type="match status" value="1"/>
</dbReference>
<dbReference type="PIRSF" id="PIRSF002599">
    <property type="entry name" value="Cold_shock_A"/>
    <property type="match status" value="1"/>
</dbReference>
<dbReference type="PRINTS" id="PR00050">
    <property type="entry name" value="COLDSHOCK"/>
</dbReference>
<dbReference type="SMART" id="SM00357">
    <property type="entry name" value="CSP"/>
    <property type="match status" value="1"/>
</dbReference>
<dbReference type="SUPFAM" id="SSF50249">
    <property type="entry name" value="Nucleic acid-binding proteins"/>
    <property type="match status" value="1"/>
</dbReference>
<dbReference type="PROSITE" id="PS00352">
    <property type="entry name" value="CSD_1"/>
    <property type="match status" value="1"/>
</dbReference>
<dbReference type="PROSITE" id="PS51857">
    <property type="entry name" value="CSD_2"/>
    <property type="match status" value="1"/>
</dbReference>
<name>CSPA_STRP6</name>
<proteinExistence type="inferred from homology"/>
<keyword id="KW-0010">Activator</keyword>
<keyword id="KW-0963">Cytoplasm</keyword>
<keyword id="KW-0238">DNA-binding</keyword>
<keyword id="KW-0346">Stress response</keyword>
<keyword id="KW-0804">Transcription</keyword>
<keyword id="KW-0805">Transcription regulation</keyword>
<comment type="subunit">
    <text evidence="1">Homodimer.</text>
</comment>
<comment type="subcellular location">
    <subcellularLocation>
        <location evidence="1">Cytoplasm</location>
    </subcellularLocation>
</comment>
<comment type="induction">
    <text evidence="1">In response to low temperature.</text>
</comment>
<comment type="sequence caution" evidence="2">
    <conflict type="erroneous initiation">
        <sequence resource="EMBL-CDS" id="AAT87899"/>
    </conflict>
</comment>
<evidence type="ECO:0000250" key="1"/>
<evidence type="ECO:0000305" key="2"/>
<accession>Q5X9L4</accession>
<reference key="1">
    <citation type="journal article" date="2004" name="J. Infect. Dis.">
        <title>Progress toward characterization of the group A Streptococcus metagenome: complete genome sequence of a macrolide-resistant serotype M6 strain.</title>
        <authorList>
            <person name="Banks D.J."/>
            <person name="Porcella S.F."/>
            <person name="Barbian K.D."/>
            <person name="Beres S.B."/>
            <person name="Philips L.E."/>
            <person name="Voyich J.M."/>
            <person name="DeLeo F.R."/>
            <person name="Martin J.M."/>
            <person name="Somerville G.A."/>
            <person name="Musser J.M."/>
        </authorList>
    </citation>
    <scope>NUCLEOTIDE SEQUENCE [LARGE SCALE GENOMIC DNA]</scope>
    <source>
        <strain>ATCC BAA-946 / MGAS10394</strain>
    </source>
</reference>
<feature type="chain" id="PRO_0000100336" description="Major cold shock protein">
    <location>
        <begin position="1"/>
        <end position="67"/>
    </location>
</feature>
<feature type="domain" description="CSD">
    <location>
        <begin position="4"/>
        <end position="63"/>
    </location>
</feature>
<protein>
    <recommendedName>
        <fullName>Major cold shock protein</fullName>
    </recommendedName>
</protein>
<gene>
    <name type="primary">cspA</name>
    <name type="synonym">csp</name>
    <name type="synonym">cspC</name>
    <name type="ordered locus">M6_Spy1764</name>
</gene>
<organism>
    <name type="scientific">Streptococcus pyogenes serotype M6 (strain ATCC BAA-946 / MGAS10394)</name>
    <dbReference type="NCBI Taxonomy" id="286636"/>
    <lineage>
        <taxon>Bacteria</taxon>
        <taxon>Bacillati</taxon>
        <taxon>Bacillota</taxon>
        <taxon>Bacilli</taxon>
        <taxon>Lactobacillales</taxon>
        <taxon>Streptococcaceae</taxon>
        <taxon>Streptococcus</taxon>
    </lineage>
</organism>
<sequence length="67" mass="7295">MAQGTVKWFNAEKGFGFISTENGQDVFAHFSAIQTSGFKTLEEGQKVAFDVEEGQRGPQAVNITKLA</sequence>